<dbReference type="EMBL" id="CP000879">
    <property type="protein sequence ID" value="ABX31099.1"/>
    <property type="molecule type" value="Genomic_DNA"/>
</dbReference>
<dbReference type="RefSeq" id="WP_012208206.1">
    <property type="nucleotide sequence ID" value="NC_010003.1"/>
</dbReference>
<dbReference type="SMR" id="A9BF35"/>
<dbReference type="STRING" id="403833.Pmob_0357"/>
<dbReference type="KEGG" id="pmo:Pmob_0357"/>
<dbReference type="eggNOG" id="COG0244">
    <property type="taxonomic scope" value="Bacteria"/>
</dbReference>
<dbReference type="HOGENOM" id="CLU_092227_2_1_0"/>
<dbReference type="OrthoDB" id="9808307at2"/>
<dbReference type="Proteomes" id="UP000000789">
    <property type="component" value="Chromosome"/>
</dbReference>
<dbReference type="GO" id="GO:0015934">
    <property type="term" value="C:large ribosomal subunit"/>
    <property type="evidence" value="ECO:0007669"/>
    <property type="project" value="InterPro"/>
</dbReference>
<dbReference type="GO" id="GO:0070180">
    <property type="term" value="F:large ribosomal subunit rRNA binding"/>
    <property type="evidence" value="ECO:0007669"/>
    <property type="project" value="UniProtKB-UniRule"/>
</dbReference>
<dbReference type="GO" id="GO:0003735">
    <property type="term" value="F:structural constituent of ribosome"/>
    <property type="evidence" value="ECO:0007669"/>
    <property type="project" value="InterPro"/>
</dbReference>
<dbReference type="GO" id="GO:0006412">
    <property type="term" value="P:translation"/>
    <property type="evidence" value="ECO:0007669"/>
    <property type="project" value="UniProtKB-UniRule"/>
</dbReference>
<dbReference type="CDD" id="cd05797">
    <property type="entry name" value="Ribosomal_L10"/>
    <property type="match status" value="1"/>
</dbReference>
<dbReference type="Gene3D" id="3.30.70.1730">
    <property type="match status" value="1"/>
</dbReference>
<dbReference type="Gene3D" id="6.10.250.290">
    <property type="match status" value="1"/>
</dbReference>
<dbReference type="HAMAP" id="MF_00362">
    <property type="entry name" value="Ribosomal_uL10"/>
    <property type="match status" value="1"/>
</dbReference>
<dbReference type="InterPro" id="IPR001790">
    <property type="entry name" value="Ribosomal_uL10"/>
</dbReference>
<dbReference type="InterPro" id="IPR043141">
    <property type="entry name" value="Ribosomal_uL10-like_sf"/>
</dbReference>
<dbReference type="InterPro" id="IPR022973">
    <property type="entry name" value="Ribosomal_uL10_bac"/>
</dbReference>
<dbReference type="InterPro" id="IPR047865">
    <property type="entry name" value="Ribosomal_uL10_bac_type"/>
</dbReference>
<dbReference type="InterPro" id="IPR002363">
    <property type="entry name" value="Ribosomal_uL10_CS_bac"/>
</dbReference>
<dbReference type="NCBIfam" id="NF000955">
    <property type="entry name" value="PRK00099.1-1"/>
    <property type="match status" value="1"/>
</dbReference>
<dbReference type="PANTHER" id="PTHR11560">
    <property type="entry name" value="39S RIBOSOMAL PROTEIN L10, MITOCHONDRIAL"/>
    <property type="match status" value="1"/>
</dbReference>
<dbReference type="Pfam" id="PF00466">
    <property type="entry name" value="Ribosomal_L10"/>
    <property type="match status" value="1"/>
</dbReference>
<dbReference type="SUPFAM" id="SSF160369">
    <property type="entry name" value="Ribosomal protein L10-like"/>
    <property type="match status" value="1"/>
</dbReference>
<dbReference type="PROSITE" id="PS01109">
    <property type="entry name" value="RIBOSOMAL_L10"/>
    <property type="match status" value="1"/>
</dbReference>
<protein>
    <recommendedName>
        <fullName evidence="1">Large ribosomal subunit protein uL10</fullName>
    </recommendedName>
    <alternativeName>
        <fullName evidence="2">50S ribosomal protein L10</fullName>
    </alternativeName>
</protein>
<feature type="chain" id="PRO_1000079553" description="Large ribosomal subunit protein uL10">
    <location>
        <begin position="1"/>
        <end position="178"/>
    </location>
</feature>
<accession>A9BF35</accession>
<reference key="1">
    <citation type="submission" date="2007-11" db="EMBL/GenBank/DDBJ databases">
        <title>Complete sequence of Petroga mobilis SJ95.</title>
        <authorList>
            <consortium name="US DOE Joint Genome Institute"/>
            <person name="Copeland A."/>
            <person name="Lucas S."/>
            <person name="Lapidus A."/>
            <person name="Barry K."/>
            <person name="Glavina del Rio T."/>
            <person name="Dalin E."/>
            <person name="Tice H."/>
            <person name="Pitluck S."/>
            <person name="Meincke L."/>
            <person name="Brettin T."/>
            <person name="Bruce D."/>
            <person name="Detter J.C."/>
            <person name="Han C."/>
            <person name="Kuske C.R."/>
            <person name="Schmutz J."/>
            <person name="Larimer F."/>
            <person name="Land M."/>
            <person name="Hauser L."/>
            <person name="Kyrpides N."/>
            <person name="Mikhailova N."/>
            <person name="Noll K."/>
            <person name="Richardson P."/>
        </authorList>
    </citation>
    <scope>NUCLEOTIDE SEQUENCE [LARGE SCALE GENOMIC DNA]</scope>
    <source>
        <strain>DSM 10674 / SJ95</strain>
    </source>
</reference>
<organism>
    <name type="scientific">Petrotoga mobilis (strain DSM 10674 / SJ95)</name>
    <dbReference type="NCBI Taxonomy" id="403833"/>
    <lineage>
        <taxon>Bacteria</taxon>
        <taxon>Thermotogati</taxon>
        <taxon>Thermotogota</taxon>
        <taxon>Thermotogae</taxon>
        <taxon>Petrotogales</taxon>
        <taxon>Petrotogaceae</taxon>
        <taxon>Petrotoga</taxon>
    </lineage>
</organism>
<sequence length="178" mass="19960">MLTKERKKSLIDSFIYALESSPVILFVDFSGMSVLESNDFRLELYKNFGKDVVFTVYRTSLLKTAVKLANKELEDFEKFFEGSTGVIYAEESDPVDVLKAVKKFSESHNNKPFIKGGVLEGKIFDAAKAEEYAKLPSKQELYATVVRSLNSPISGLVNALSGNLRKVVYVINAIKEKK</sequence>
<keyword id="KW-0687">Ribonucleoprotein</keyword>
<keyword id="KW-0689">Ribosomal protein</keyword>
<keyword id="KW-0694">RNA-binding</keyword>
<keyword id="KW-0699">rRNA-binding</keyword>
<name>RL10_PETMO</name>
<comment type="function">
    <text evidence="1">Forms part of the ribosomal stalk, playing a central role in the interaction of the ribosome with GTP-bound translation factors.</text>
</comment>
<comment type="subunit">
    <text evidence="1">Part of the ribosomal stalk of the 50S ribosomal subunit. The N-terminus interacts with L11 and the large rRNA to form the base of the stalk. The C-terminus forms an elongated spine to which L12 dimers bind in a sequential fashion forming a multimeric L10(L12)X complex.</text>
</comment>
<comment type="similarity">
    <text evidence="1">Belongs to the universal ribosomal protein uL10 family.</text>
</comment>
<gene>
    <name evidence="1" type="primary">rplJ</name>
    <name type="ordered locus">Pmob_0357</name>
</gene>
<evidence type="ECO:0000255" key="1">
    <source>
        <dbReference type="HAMAP-Rule" id="MF_00362"/>
    </source>
</evidence>
<evidence type="ECO:0000305" key="2"/>
<proteinExistence type="inferred from homology"/>